<gene>
    <name evidence="2" type="primary">rpsL</name>
    <name type="ordered locus">TM1040_0239</name>
</gene>
<keyword id="KW-0488">Methylation</keyword>
<keyword id="KW-1185">Reference proteome</keyword>
<keyword id="KW-0687">Ribonucleoprotein</keyword>
<keyword id="KW-0689">Ribosomal protein</keyword>
<keyword id="KW-0694">RNA-binding</keyword>
<keyword id="KW-0699">rRNA-binding</keyword>
<keyword id="KW-0820">tRNA-binding</keyword>
<protein>
    <recommendedName>
        <fullName evidence="2">Small ribosomal subunit protein uS12</fullName>
    </recommendedName>
    <alternativeName>
        <fullName evidence="4">30S ribosomal protein S12</fullName>
    </alternativeName>
</protein>
<evidence type="ECO:0000250" key="1"/>
<evidence type="ECO:0000255" key="2">
    <source>
        <dbReference type="HAMAP-Rule" id="MF_00403"/>
    </source>
</evidence>
<evidence type="ECO:0000256" key="3">
    <source>
        <dbReference type="SAM" id="MobiDB-lite"/>
    </source>
</evidence>
<evidence type="ECO:0000305" key="4"/>
<accession>Q1GK44</accession>
<comment type="function">
    <text evidence="2">With S4 and S5 plays an important role in translational accuracy.</text>
</comment>
<comment type="function">
    <text evidence="2">Interacts with and stabilizes bases of the 16S rRNA that are involved in tRNA selection in the A site and with the mRNA backbone. Located at the interface of the 30S and 50S subunits, it traverses the body of the 30S subunit contacting proteins on the other side and probably holding the rRNA structure together. The combined cluster of proteins S8, S12 and S17 appears to hold together the shoulder and platform of the 30S subunit.</text>
</comment>
<comment type="subunit">
    <text evidence="2">Part of the 30S ribosomal subunit. Contacts proteins S8 and S17. May interact with IF1 in the 30S initiation complex.</text>
</comment>
<comment type="similarity">
    <text evidence="2">Belongs to the universal ribosomal protein uS12 family.</text>
</comment>
<proteinExistence type="inferred from homology"/>
<feature type="chain" id="PRO_0000263593" description="Small ribosomal subunit protein uS12">
    <location>
        <begin position="1"/>
        <end position="123"/>
    </location>
</feature>
<feature type="region of interest" description="Disordered" evidence="3">
    <location>
        <begin position="1"/>
        <end position="28"/>
    </location>
</feature>
<feature type="compositionally biased region" description="Basic residues" evidence="3">
    <location>
        <begin position="9"/>
        <end position="21"/>
    </location>
</feature>
<feature type="modified residue" description="3-methylthioaspartic acid" evidence="1">
    <location>
        <position position="89"/>
    </location>
</feature>
<reference key="1">
    <citation type="submission" date="2006-05" db="EMBL/GenBank/DDBJ databases">
        <title>Complete sequence of chromosome of Silicibacter sp. TM1040.</title>
        <authorList>
            <consortium name="US DOE Joint Genome Institute"/>
            <person name="Copeland A."/>
            <person name="Lucas S."/>
            <person name="Lapidus A."/>
            <person name="Barry K."/>
            <person name="Detter J.C."/>
            <person name="Glavina del Rio T."/>
            <person name="Hammon N."/>
            <person name="Israni S."/>
            <person name="Dalin E."/>
            <person name="Tice H."/>
            <person name="Pitluck S."/>
            <person name="Brettin T."/>
            <person name="Bruce D."/>
            <person name="Han C."/>
            <person name="Tapia R."/>
            <person name="Goodwin L."/>
            <person name="Thompson L.S."/>
            <person name="Gilna P."/>
            <person name="Schmutz J."/>
            <person name="Larimer F."/>
            <person name="Land M."/>
            <person name="Hauser L."/>
            <person name="Kyrpides N."/>
            <person name="Kim E."/>
            <person name="Belas R."/>
            <person name="Moran M.A."/>
            <person name="Buchan A."/>
            <person name="Gonzalez J.M."/>
            <person name="Schell M.A."/>
            <person name="Sun F."/>
            <person name="Richardson P."/>
        </authorList>
    </citation>
    <scope>NUCLEOTIDE SEQUENCE [LARGE SCALE GENOMIC DNA]</scope>
    <source>
        <strain>TM1040</strain>
    </source>
</reference>
<dbReference type="EMBL" id="CP000377">
    <property type="protein sequence ID" value="ABF62972.1"/>
    <property type="molecule type" value="Genomic_DNA"/>
</dbReference>
<dbReference type="RefSeq" id="WP_005621086.1">
    <property type="nucleotide sequence ID" value="NC_008044.1"/>
</dbReference>
<dbReference type="SMR" id="Q1GK44"/>
<dbReference type="STRING" id="292414.TM1040_0239"/>
<dbReference type="GeneID" id="78398357"/>
<dbReference type="KEGG" id="sit:TM1040_0239"/>
<dbReference type="eggNOG" id="COG0048">
    <property type="taxonomic scope" value="Bacteria"/>
</dbReference>
<dbReference type="HOGENOM" id="CLU_104295_1_2_5"/>
<dbReference type="OrthoDB" id="9802366at2"/>
<dbReference type="Proteomes" id="UP000000636">
    <property type="component" value="Chromosome"/>
</dbReference>
<dbReference type="GO" id="GO:0015935">
    <property type="term" value="C:small ribosomal subunit"/>
    <property type="evidence" value="ECO:0007669"/>
    <property type="project" value="InterPro"/>
</dbReference>
<dbReference type="GO" id="GO:0019843">
    <property type="term" value="F:rRNA binding"/>
    <property type="evidence" value="ECO:0007669"/>
    <property type="project" value="UniProtKB-UniRule"/>
</dbReference>
<dbReference type="GO" id="GO:0003735">
    <property type="term" value="F:structural constituent of ribosome"/>
    <property type="evidence" value="ECO:0007669"/>
    <property type="project" value="InterPro"/>
</dbReference>
<dbReference type="GO" id="GO:0000049">
    <property type="term" value="F:tRNA binding"/>
    <property type="evidence" value="ECO:0007669"/>
    <property type="project" value="UniProtKB-UniRule"/>
</dbReference>
<dbReference type="GO" id="GO:0006412">
    <property type="term" value="P:translation"/>
    <property type="evidence" value="ECO:0007669"/>
    <property type="project" value="UniProtKB-UniRule"/>
</dbReference>
<dbReference type="CDD" id="cd03368">
    <property type="entry name" value="Ribosomal_S12"/>
    <property type="match status" value="1"/>
</dbReference>
<dbReference type="FunFam" id="2.40.50.140:FF:000001">
    <property type="entry name" value="30S ribosomal protein S12"/>
    <property type="match status" value="1"/>
</dbReference>
<dbReference type="Gene3D" id="2.40.50.140">
    <property type="entry name" value="Nucleic acid-binding proteins"/>
    <property type="match status" value="1"/>
</dbReference>
<dbReference type="HAMAP" id="MF_00403_B">
    <property type="entry name" value="Ribosomal_uS12_B"/>
    <property type="match status" value="1"/>
</dbReference>
<dbReference type="InterPro" id="IPR012340">
    <property type="entry name" value="NA-bd_OB-fold"/>
</dbReference>
<dbReference type="InterPro" id="IPR006032">
    <property type="entry name" value="Ribosomal_uS12"/>
</dbReference>
<dbReference type="InterPro" id="IPR005679">
    <property type="entry name" value="Ribosomal_uS12_bac"/>
</dbReference>
<dbReference type="NCBIfam" id="TIGR00981">
    <property type="entry name" value="rpsL_bact"/>
    <property type="match status" value="1"/>
</dbReference>
<dbReference type="PANTHER" id="PTHR11652">
    <property type="entry name" value="30S RIBOSOMAL PROTEIN S12 FAMILY MEMBER"/>
    <property type="match status" value="1"/>
</dbReference>
<dbReference type="Pfam" id="PF00164">
    <property type="entry name" value="Ribosom_S12_S23"/>
    <property type="match status" value="1"/>
</dbReference>
<dbReference type="PIRSF" id="PIRSF002133">
    <property type="entry name" value="Ribosomal_S12/S23"/>
    <property type="match status" value="1"/>
</dbReference>
<dbReference type="PRINTS" id="PR01034">
    <property type="entry name" value="RIBOSOMALS12"/>
</dbReference>
<dbReference type="SUPFAM" id="SSF50249">
    <property type="entry name" value="Nucleic acid-binding proteins"/>
    <property type="match status" value="1"/>
</dbReference>
<dbReference type="PROSITE" id="PS00055">
    <property type="entry name" value="RIBOSOMAL_S12"/>
    <property type="match status" value="1"/>
</dbReference>
<name>RS12_RUEST</name>
<organism>
    <name type="scientific">Ruegeria sp. (strain TM1040)</name>
    <name type="common">Silicibacter sp.</name>
    <dbReference type="NCBI Taxonomy" id="292414"/>
    <lineage>
        <taxon>Bacteria</taxon>
        <taxon>Pseudomonadati</taxon>
        <taxon>Pseudomonadota</taxon>
        <taxon>Alphaproteobacteria</taxon>
        <taxon>Rhodobacterales</taxon>
        <taxon>Roseobacteraceae</taxon>
        <taxon>Ruegeria</taxon>
    </lineage>
</organism>
<sequence>MPTIQQLIRKPRQPKVKRSKSMHLEQCPQKRGVCTRVYTTTPKKPNSAMRKVAKVRLTNGFEVISYIPGESHNLQEHSVVLIRGGRVKDLPGVRYHILRGVLDTQGVKDRKQRRSKYGAKRPK</sequence>